<name>NACA_GIBZE</name>
<feature type="chain" id="PRO_0000273491" description="Nascent polypeptide-associated complex subunit alpha">
    <location>
        <begin position="1"/>
        <end position="209"/>
    </location>
</feature>
<feature type="domain" description="NAC-A/B" evidence="2">
    <location>
        <begin position="49"/>
        <end position="114"/>
    </location>
</feature>
<feature type="domain" description="UBA">
    <location>
        <begin position="170"/>
        <end position="209"/>
    </location>
</feature>
<feature type="region of interest" description="Disordered" evidence="3">
    <location>
        <begin position="1"/>
        <end position="51"/>
    </location>
</feature>
<feature type="region of interest" description="Disordered" evidence="3">
    <location>
        <begin position="121"/>
        <end position="175"/>
    </location>
</feature>
<feature type="compositionally biased region" description="Basic and acidic residues" evidence="3">
    <location>
        <begin position="1"/>
        <end position="21"/>
    </location>
</feature>
<feature type="compositionally biased region" description="Acidic residues" evidence="3">
    <location>
        <begin position="22"/>
        <end position="36"/>
    </location>
</feature>
<feature type="compositionally biased region" description="Basic and acidic residues" evidence="3">
    <location>
        <begin position="127"/>
        <end position="150"/>
    </location>
</feature>
<feature type="compositionally biased region" description="Acidic residues" evidence="3">
    <location>
        <begin position="151"/>
        <end position="166"/>
    </location>
</feature>
<proteinExistence type="inferred from homology"/>
<organism>
    <name type="scientific">Gibberella zeae (strain ATCC MYA-4620 / CBS 123657 / FGSC 9075 / NRRL 31084 / PH-1)</name>
    <name type="common">Wheat head blight fungus</name>
    <name type="synonym">Fusarium graminearum</name>
    <dbReference type="NCBI Taxonomy" id="229533"/>
    <lineage>
        <taxon>Eukaryota</taxon>
        <taxon>Fungi</taxon>
        <taxon>Dikarya</taxon>
        <taxon>Ascomycota</taxon>
        <taxon>Pezizomycotina</taxon>
        <taxon>Sordariomycetes</taxon>
        <taxon>Hypocreomycetidae</taxon>
        <taxon>Hypocreales</taxon>
        <taxon>Nectriaceae</taxon>
        <taxon>Fusarium</taxon>
    </lineage>
</organism>
<evidence type="ECO:0000250" key="1"/>
<evidence type="ECO:0000255" key="2">
    <source>
        <dbReference type="PROSITE-ProRule" id="PRU00507"/>
    </source>
</evidence>
<evidence type="ECO:0000256" key="3">
    <source>
        <dbReference type="SAM" id="MobiDB-lite"/>
    </source>
</evidence>
<evidence type="ECO:0000305" key="4"/>
<sequence>MSNPRVEELPDEEPKKTTVQEHEDDSSDDSEVEEVGEGQLPAGSTVIHNRNEKKARKALEKLHLTRIPGITRVTLRRPKNILFVINTPEVYKSPNSNTYIVFGEAKIEDVNAAAQQAAAAQLASQNAEDHSGHNHGEPSKAVEADEKKEDKEDDEDEEEEEEEEVDASGLEDKDIELVMTQANVSRNKAVKALKENDNDIVNSIMALSI</sequence>
<comment type="function">
    <text evidence="1">Component of the nascent polypeptide-associated complex (NAC), a dynamic component of the ribosomal exit tunnel, protecting the emerging polypeptides from interaction with other cytoplasmic proteins to ensure appropriate nascent protein targeting. The NAC complex also promotes mitochondrial protein import by enhancing productive ribosome interactions with the outer mitochondrial membrane and blocks the inappropriate interaction of ribosomes translating non-secretory nascent polypeptides with translocation sites in the membrane of the endoplasmic reticulum. EGD2 may also be involved in transcription regulation (By similarity).</text>
</comment>
<comment type="subunit">
    <text evidence="1">Part of the nascent polypeptide-associated complex (NAC), consisting of EGD2 and EGD1. NAC associates with ribosomes via EGD1 (By similarity).</text>
</comment>
<comment type="subcellular location">
    <subcellularLocation>
        <location evidence="1">Cytoplasm</location>
    </subcellularLocation>
    <subcellularLocation>
        <location evidence="1">Nucleus</location>
    </subcellularLocation>
    <text evidence="1">Predominantly cytoplasmic, may also transiently localize to the nucleus.</text>
</comment>
<comment type="similarity">
    <text evidence="4">Belongs to the NAC-alpha family.</text>
</comment>
<dbReference type="EMBL" id="DS231667">
    <property type="protein sequence ID" value="ESU14767.1"/>
    <property type="molecule type" value="Genomic_DNA"/>
</dbReference>
<dbReference type="EMBL" id="HG970333">
    <property type="protein sequence ID" value="CEF76935.1"/>
    <property type="molecule type" value="Genomic_DNA"/>
</dbReference>
<dbReference type="RefSeq" id="XP_011320192.1">
    <property type="nucleotide sequence ID" value="XM_011321890.1"/>
</dbReference>
<dbReference type="SMR" id="Q4I2J8"/>
<dbReference type="FunCoup" id="Q4I2J8">
    <property type="interactions" value="560"/>
</dbReference>
<dbReference type="STRING" id="229533.Q4I2J8"/>
<dbReference type="GeneID" id="23555559"/>
<dbReference type="KEGG" id="fgr:FGSG_08560"/>
<dbReference type="VEuPathDB" id="FungiDB:FGRAMPH1_01G10263"/>
<dbReference type="eggNOG" id="KOG2239">
    <property type="taxonomic scope" value="Eukaryota"/>
</dbReference>
<dbReference type="HOGENOM" id="CLU_057806_2_0_1"/>
<dbReference type="InParanoid" id="Q4I2J8"/>
<dbReference type="OrthoDB" id="132971at110618"/>
<dbReference type="Proteomes" id="UP000070720">
    <property type="component" value="Chromosome 2"/>
</dbReference>
<dbReference type="GO" id="GO:0005854">
    <property type="term" value="C:nascent polypeptide-associated complex"/>
    <property type="evidence" value="ECO:0007669"/>
    <property type="project" value="InterPro"/>
</dbReference>
<dbReference type="GO" id="GO:0005634">
    <property type="term" value="C:nucleus"/>
    <property type="evidence" value="ECO:0007669"/>
    <property type="project" value="UniProtKB-SubCell"/>
</dbReference>
<dbReference type="GO" id="GO:0015031">
    <property type="term" value="P:protein transport"/>
    <property type="evidence" value="ECO:0007669"/>
    <property type="project" value="UniProtKB-KW"/>
</dbReference>
<dbReference type="CDD" id="cd22054">
    <property type="entry name" value="NAC_NACA"/>
    <property type="match status" value="1"/>
</dbReference>
<dbReference type="CDD" id="cd14358">
    <property type="entry name" value="UBA_NAC_euk"/>
    <property type="match status" value="1"/>
</dbReference>
<dbReference type="FunFam" id="2.20.70.30:FF:000002">
    <property type="entry name" value="Nascent polypeptide-associated complex (NAC), alpha subunit"/>
    <property type="match status" value="1"/>
</dbReference>
<dbReference type="FunFam" id="1.10.8.10:FF:000006">
    <property type="entry name" value="Putative nascent polypeptide-associated complex subunit alpha"/>
    <property type="match status" value="1"/>
</dbReference>
<dbReference type="Gene3D" id="1.10.8.10">
    <property type="entry name" value="DNA helicase RuvA subunit, C-terminal domain"/>
    <property type="match status" value="1"/>
</dbReference>
<dbReference type="Gene3D" id="2.20.70.30">
    <property type="entry name" value="Nascent polypeptide-associated complex domain"/>
    <property type="match status" value="1"/>
</dbReference>
<dbReference type="InterPro" id="IPR016641">
    <property type="entry name" value="EGD2/NACA0like"/>
</dbReference>
<dbReference type="InterPro" id="IPR044034">
    <property type="entry name" value="NAC-like_UBA"/>
</dbReference>
<dbReference type="InterPro" id="IPR038187">
    <property type="entry name" value="NAC_A/B_dom_sf"/>
</dbReference>
<dbReference type="InterPro" id="IPR002715">
    <property type="entry name" value="Nas_poly-pep-assoc_cplx_dom"/>
</dbReference>
<dbReference type="PANTHER" id="PTHR21713">
    <property type="entry name" value="NASCENT POLYPEPTIDE ASSOCIATED COMPLEX ALPHA SUBUNIT-RELATED"/>
    <property type="match status" value="1"/>
</dbReference>
<dbReference type="Pfam" id="PF01849">
    <property type="entry name" value="NAC"/>
    <property type="match status" value="1"/>
</dbReference>
<dbReference type="Pfam" id="PF19026">
    <property type="entry name" value="UBA_HYPK"/>
    <property type="match status" value="1"/>
</dbReference>
<dbReference type="PIRSF" id="PIRSF015901">
    <property type="entry name" value="NAC_alpha"/>
    <property type="match status" value="1"/>
</dbReference>
<dbReference type="SMART" id="SM01407">
    <property type="entry name" value="NAC"/>
    <property type="match status" value="1"/>
</dbReference>
<dbReference type="PROSITE" id="PS51151">
    <property type="entry name" value="NAC_AB"/>
    <property type="match status" value="1"/>
</dbReference>
<gene>
    <name type="primary">EGD2</name>
    <name type="ORF">FGRRES_08560</name>
    <name type="ORF">FGSG_08560</name>
</gene>
<keyword id="KW-0963">Cytoplasm</keyword>
<keyword id="KW-0539">Nucleus</keyword>
<keyword id="KW-0653">Protein transport</keyword>
<keyword id="KW-1185">Reference proteome</keyword>
<keyword id="KW-0813">Transport</keyword>
<protein>
    <recommendedName>
        <fullName>Nascent polypeptide-associated complex subunit alpha</fullName>
        <shortName>NAC-alpha</shortName>
    </recommendedName>
    <alternativeName>
        <fullName>Alpha-NAC</fullName>
    </alternativeName>
</protein>
<reference key="1">
    <citation type="journal article" date="2007" name="Science">
        <title>The Fusarium graminearum genome reveals a link between localized polymorphism and pathogen specialization.</title>
        <authorList>
            <person name="Cuomo C.A."/>
            <person name="Gueldener U."/>
            <person name="Xu J.-R."/>
            <person name="Trail F."/>
            <person name="Turgeon B.G."/>
            <person name="Di Pietro A."/>
            <person name="Walton J.D."/>
            <person name="Ma L.-J."/>
            <person name="Baker S.E."/>
            <person name="Rep M."/>
            <person name="Adam G."/>
            <person name="Antoniw J."/>
            <person name="Baldwin T."/>
            <person name="Calvo S.E."/>
            <person name="Chang Y.-L."/>
            <person name="DeCaprio D."/>
            <person name="Gale L.R."/>
            <person name="Gnerre S."/>
            <person name="Goswami R.S."/>
            <person name="Hammond-Kosack K."/>
            <person name="Harris L.J."/>
            <person name="Hilburn K."/>
            <person name="Kennell J.C."/>
            <person name="Kroken S."/>
            <person name="Magnuson J.K."/>
            <person name="Mannhaupt G."/>
            <person name="Mauceli E.W."/>
            <person name="Mewes H.-W."/>
            <person name="Mitterbauer R."/>
            <person name="Muehlbauer G."/>
            <person name="Muensterkoetter M."/>
            <person name="Nelson D."/>
            <person name="O'Donnell K."/>
            <person name="Ouellet T."/>
            <person name="Qi W."/>
            <person name="Quesneville H."/>
            <person name="Roncero M.I.G."/>
            <person name="Seong K.-Y."/>
            <person name="Tetko I.V."/>
            <person name="Urban M."/>
            <person name="Waalwijk C."/>
            <person name="Ward T.J."/>
            <person name="Yao J."/>
            <person name="Birren B.W."/>
            <person name="Kistler H.C."/>
        </authorList>
    </citation>
    <scope>NUCLEOTIDE SEQUENCE [LARGE SCALE GENOMIC DNA]</scope>
    <source>
        <strain>ATCC MYA-4620 / CBS 123657 / FGSC 9075 / NRRL 31084 / PH-1</strain>
    </source>
</reference>
<reference key="2">
    <citation type="journal article" date="2010" name="Nature">
        <title>Comparative genomics reveals mobile pathogenicity chromosomes in Fusarium.</title>
        <authorList>
            <person name="Ma L.-J."/>
            <person name="van der Does H.C."/>
            <person name="Borkovich K.A."/>
            <person name="Coleman J.J."/>
            <person name="Daboussi M.-J."/>
            <person name="Di Pietro A."/>
            <person name="Dufresne M."/>
            <person name="Freitag M."/>
            <person name="Grabherr M."/>
            <person name="Henrissat B."/>
            <person name="Houterman P.M."/>
            <person name="Kang S."/>
            <person name="Shim W.-B."/>
            <person name="Woloshuk C."/>
            <person name="Xie X."/>
            <person name="Xu J.-R."/>
            <person name="Antoniw J."/>
            <person name="Baker S.E."/>
            <person name="Bluhm B.H."/>
            <person name="Breakspear A."/>
            <person name="Brown D.W."/>
            <person name="Butchko R.A.E."/>
            <person name="Chapman S."/>
            <person name="Coulson R."/>
            <person name="Coutinho P.M."/>
            <person name="Danchin E.G.J."/>
            <person name="Diener A."/>
            <person name="Gale L.R."/>
            <person name="Gardiner D.M."/>
            <person name="Goff S."/>
            <person name="Hammond-Kosack K.E."/>
            <person name="Hilburn K."/>
            <person name="Hua-Van A."/>
            <person name="Jonkers W."/>
            <person name="Kazan K."/>
            <person name="Kodira C.D."/>
            <person name="Koehrsen M."/>
            <person name="Kumar L."/>
            <person name="Lee Y.-H."/>
            <person name="Li L."/>
            <person name="Manners J.M."/>
            <person name="Miranda-Saavedra D."/>
            <person name="Mukherjee M."/>
            <person name="Park G."/>
            <person name="Park J."/>
            <person name="Park S.-Y."/>
            <person name="Proctor R.H."/>
            <person name="Regev A."/>
            <person name="Ruiz-Roldan M.C."/>
            <person name="Sain D."/>
            <person name="Sakthikumar S."/>
            <person name="Sykes S."/>
            <person name="Schwartz D.C."/>
            <person name="Turgeon B.G."/>
            <person name="Wapinski I."/>
            <person name="Yoder O."/>
            <person name="Young S."/>
            <person name="Zeng Q."/>
            <person name="Zhou S."/>
            <person name="Galagan J."/>
            <person name="Cuomo C.A."/>
            <person name="Kistler H.C."/>
            <person name="Rep M."/>
        </authorList>
    </citation>
    <scope>GENOME REANNOTATION</scope>
    <source>
        <strain>ATCC MYA-4620 / CBS 123657 / FGSC 9075 / NRRL 31084 / PH-1</strain>
    </source>
</reference>
<reference key="3">
    <citation type="journal article" date="2015" name="BMC Genomics">
        <title>The completed genome sequence of the pathogenic ascomycete fungus Fusarium graminearum.</title>
        <authorList>
            <person name="King R."/>
            <person name="Urban M."/>
            <person name="Hammond-Kosack M.C.U."/>
            <person name="Hassani-Pak K."/>
            <person name="Hammond-Kosack K.E."/>
        </authorList>
    </citation>
    <scope>NUCLEOTIDE SEQUENCE [LARGE SCALE GENOMIC DNA]</scope>
    <source>
        <strain>ATCC MYA-4620 / CBS 123657 / FGSC 9075 / NRRL 31084 / PH-1</strain>
    </source>
</reference>
<accession>Q4I2J8</accession>
<accession>A0A0E0S0B0</accession>
<accession>V6RLC4</accession>